<name>AATB_AERPE</name>
<gene>
    <name evidence="1" type="primary">atpB</name>
    <name type="ordered locus">APE_0404.1</name>
</gene>
<dbReference type="EMBL" id="BA000002">
    <property type="protein sequence ID" value="BAA79360.2"/>
    <property type="molecule type" value="Genomic_DNA"/>
</dbReference>
<dbReference type="PIR" id="D72733">
    <property type="entry name" value="D72733"/>
</dbReference>
<dbReference type="RefSeq" id="WP_010865715.1">
    <property type="nucleotide sequence ID" value="NC_000854.2"/>
</dbReference>
<dbReference type="SMR" id="Q9YF36"/>
<dbReference type="STRING" id="272557.APE_0404.1"/>
<dbReference type="EnsemblBacteria" id="BAA79360">
    <property type="protein sequence ID" value="BAA79360"/>
    <property type="gene ID" value="APE_0404.1"/>
</dbReference>
<dbReference type="GeneID" id="1444598"/>
<dbReference type="KEGG" id="ape:APE_0404.1"/>
<dbReference type="PATRIC" id="fig|272557.25.peg.301"/>
<dbReference type="eggNOG" id="arCOG00865">
    <property type="taxonomic scope" value="Archaea"/>
</dbReference>
<dbReference type="Proteomes" id="UP000002518">
    <property type="component" value="Chromosome"/>
</dbReference>
<dbReference type="GO" id="GO:0005886">
    <property type="term" value="C:plasma membrane"/>
    <property type="evidence" value="ECO:0007669"/>
    <property type="project" value="UniProtKB-SubCell"/>
</dbReference>
<dbReference type="GO" id="GO:0033178">
    <property type="term" value="C:proton-transporting two-sector ATPase complex, catalytic domain"/>
    <property type="evidence" value="ECO:0007669"/>
    <property type="project" value="InterPro"/>
</dbReference>
<dbReference type="GO" id="GO:0005524">
    <property type="term" value="F:ATP binding"/>
    <property type="evidence" value="ECO:0007669"/>
    <property type="project" value="UniProtKB-UniRule"/>
</dbReference>
<dbReference type="GO" id="GO:0046933">
    <property type="term" value="F:proton-transporting ATP synthase activity, rotational mechanism"/>
    <property type="evidence" value="ECO:0007669"/>
    <property type="project" value="UniProtKB-UniRule"/>
</dbReference>
<dbReference type="GO" id="GO:0046961">
    <property type="term" value="F:proton-transporting ATPase activity, rotational mechanism"/>
    <property type="evidence" value="ECO:0007669"/>
    <property type="project" value="TreeGrafter"/>
</dbReference>
<dbReference type="GO" id="GO:0042777">
    <property type="term" value="P:proton motive force-driven plasma membrane ATP synthesis"/>
    <property type="evidence" value="ECO:0007669"/>
    <property type="project" value="UniProtKB-UniRule"/>
</dbReference>
<dbReference type="CDD" id="cd18112">
    <property type="entry name" value="ATP-synt_V_A-type_beta_C"/>
    <property type="match status" value="1"/>
</dbReference>
<dbReference type="CDD" id="cd18118">
    <property type="entry name" value="ATP-synt_V_A-type_beta_N"/>
    <property type="match status" value="1"/>
</dbReference>
<dbReference type="CDD" id="cd01135">
    <property type="entry name" value="V_A-ATPase_B"/>
    <property type="match status" value="1"/>
</dbReference>
<dbReference type="Gene3D" id="3.40.50.12240">
    <property type="match status" value="1"/>
</dbReference>
<dbReference type="HAMAP" id="MF_00310">
    <property type="entry name" value="ATP_synth_B_arch"/>
    <property type="match status" value="1"/>
</dbReference>
<dbReference type="InterPro" id="IPR055190">
    <property type="entry name" value="ATP-synt_VA_C"/>
</dbReference>
<dbReference type="InterPro" id="IPR020003">
    <property type="entry name" value="ATPase_a/bsu_AS"/>
</dbReference>
<dbReference type="InterPro" id="IPR005724">
    <property type="entry name" value="ATPase_A1-cplx_bsu"/>
</dbReference>
<dbReference type="InterPro" id="IPR004100">
    <property type="entry name" value="ATPase_F1/V1/A1_a/bsu_N"/>
</dbReference>
<dbReference type="InterPro" id="IPR000194">
    <property type="entry name" value="ATPase_F1/V1/A1_a/bsu_nucl-bd"/>
</dbReference>
<dbReference type="InterPro" id="IPR027417">
    <property type="entry name" value="P-loop_NTPase"/>
</dbReference>
<dbReference type="InterPro" id="IPR022879">
    <property type="entry name" value="V-ATPase_su_B/beta"/>
</dbReference>
<dbReference type="NCBIfam" id="TIGR01041">
    <property type="entry name" value="ATP_syn_B_arch"/>
    <property type="match status" value="1"/>
</dbReference>
<dbReference type="NCBIfam" id="NF003235">
    <property type="entry name" value="PRK04196.1"/>
    <property type="match status" value="1"/>
</dbReference>
<dbReference type="PANTHER" id="PTHR43389">
    <property type="entry name" value="V-TYPE PROTON ATPASE SUBUNIT B"/>
    <property type="match status" value="1"/>
</dbReference>
<dbReference type="PANTHER" id="PTHR43389:SF4">
    <property type="entry name" value="V-TYPE PROTON ATPASE SUBUNIT B"/>
    <property type="match status" value="1"/>
</dbReference>
<dbReference type="Pfam" id="PF00006">
    <property type="entry name" value="ATP-synt_ab"/>
    <property type="match status" value="1"/>
</dbReference>
<dbReference type="Pfam" id="PF02874">
    <property type="entry name" value="ATP-synt_ab_N"/>
    <property type="match status" value="1"/>
</dbReference>
<dbReference type="Pfam" id="PF22919">
    <property type="entry name" value="ATP-synt_VA_C"/>
    <property type="match status" value="1"/>
</dbReference>
<dbReference type="PIRSF" id="PIRSF039114">
    <property type="entry name" value="V-ATPsynth_beta/V-ATPase_B"/>
    <property type="match status" value="1"/>
</dbReference>
<dbReference type="SUPFAM" id="SSF47917">
    <property type="entry name" value="C-terminal domain of alpha and beta subunits of F1 ATP synthase"/>
    <property type="match status" value="1"/>
</dbReference>
<dbReference type="SUPFAM" id="SSF52540">
    <property type="entry name" value="P-loop containing nucleoside triphosphate hydrolases"/>
    <property type="match status" value="1"/>
</dbReference>
<dbReference type="PROSITE" id="PS00152">
    <property type="entry name" value="ATPASE_ALPHA_BETA"/>
    <property type="match status" value="1"/>
</dbReference>
<evidence type="ECO:0000255" key="1">
    <source>
        <dbReference type="HAMAP-Rule" id="MF_00310"/>
    </source>
</evidence>
<protein>
    <recommendedName>
        <fullName evidence="1">A-type ATP synthase subunit B</fullName>
    </recommendedName>
</protein>
<organism>
    <name type="scientific">Aeropyrum pernix (strain ATCC 700893 / DSM 11879 / JCM 9820 / NBRC 100138 / K1)</name>
    <dbReference type="NCBI Taxonomy" id="272557"/>
    <lineage>
        <taxon>Archaea</taxon>
        <taxon>Thermoproteota</taxon>
        <taxon>Thermoprotei</taxon>
        <taxon>Desulfurococcales</taxon>
        <taxon>Desulfurococcaceae</taxon>
        <taxon>Aeropyrum</taxon>
    </lineage>
</organism>
<accession>Q9YF36</accession>
<proteinExistence type="inferred from homology"/>
<keyword id="KW-0066">ATP synthesis</keyword>
<keyword id="KW-1003">Cell membrane</keyword>
<keyword id="KW-0375">Hydrogen ion transport</keyword>
<keyword id="KW-0406">Ion transport</keyword>
<keyword id="KW-0472">Membrane</keyword>
<keyword id="KW-1185">Reference proteome</keyword>
<keyword id="KW-0813">Transport</keyword>
<sequence length="463" mass="51632">MALGVREYRNISEIKGPLLVVEGVSRVAYDEIVEVETAAGEKRRGRVLEVGMGYAVVQVFEGTTGISPTGTVVRFMGRPLEIPVTEDMLGRIMNGLGEPIDGGPKIDADERRDVNGAPLNPAERAYPEDFIQTGVSAIDGMNTLVRGQKLPIFSGAGLPHNRLAAQIARQATVRGEEEEFAVVFSAIGIKYDDFLFFKKFFEETGALGRVAMFVNLADEPAMIRLITPRAALTLAEYLAYERDMHVLVIITDMTNYAEALREISAAREEVPGRQGYPGYLYSDLASIYERAGRVKGKKGSITQMPILTMPNDDITHPIPDLTGYITEGQIVLSRELHNRGIYPPINVLMSLSRLMKEGIGPGKTREDHAEVSNQLYASYSRGVELRSLTAVVGEESLSERDRRYLKFADLFEQRFLKQGERENRSIEETLDIAWEILSVLPEEELVNIKEETIKKYHPKYRAG</sequence>
<reference key="1">
    <citation type="journal article" date="1999" name="DNA Res.">
        <title>Complete genome sequence of an aerobic hyper-thermophilic crenarchaeon, Aeropyrum pernix K1.</title>
        <authorList>
            <person name="Kawarabayasi Y."/>
            <person name="Hino Y."/>
            <person name="Horikawa H."/>
            <person name="Yamazaki S."/>
            <person name="Haikawa Y."/>
            <person name="Jin-no K."/>
            <person name="Takahashi M."/>
            <person name="Sekine M."/>
            <person name="Baba S."/>
            <person name="Ankai A."/>
            <person name="Kosugi H."/>
            <person name="Hosoyama A."/>
            <person name="Fukui S."/>
            <person name="Nagai Y."/>
            <person name="Nishijima K."/>
            <person name="Nakazawa H."/>
            <person name="Takamiya M."/>
            <person name="Masuda S."/>
            <person name="Funahashi T."/>
            <person name="Tanaka T."/>
            <person name="Kudoh Y."/>
            <person name="Yamazaki J."/>
            <person name="Kushida N."/>
            <person name="Oguchi A."/>
            <person name="Aoki K."/>
            <person name="Kubota K."/>
            <person name="Nakamura Y."/>
            <person name="Nomura N."/>
            <person name="Sako Y."/>
            <person name="Kikuchi H."/>
        </authorList>
    </citation>
    <scope>NUCLEOTIDE SEQUENCE [LARGE SCALE GENOMIC DNA]</scope>
    <source>
        <strain>ATCC 700893 / DSM 11879 / JCM 9820 / NBRC 100138 / K1</strain>
    </source>
</reference>
<comment type="function">
    <text evidence="1">Component of the A-type ATP synthase that produces ATP from ADP in the presence of a proton gradient across the membrane. The B chain is a regulatory subunit.</text>
</comment>
<comment type="subunit">
    <text evidence="1">Has multiple subunits with at least A(3), B(3), C, D, E, F, H, I and proteolipid K(x).</text>
</comment>
<comment type="subcellular location">
    <subcellularLocation>
        <location evidence="1">Cell membrane</location>
        <topology evidence="1">Peripheral membrane protein</topology>
    </subcellularLocation>
</comment>
<comment type="similarity">
    <text evidence="1">Belongs to the ATPase alpha/beta chains family.</text>
</comment>
<feature type="chain" id="PRO_0000144649" description="A-type ATP synthase subunit B">
    <location>
        <begin position="1"/>
        <end position="463"/>
    </location>
</feature>